<proteinExistence type="inferred from homology"/>
<organism>
    <name type="scientific">Pseudomonas putida (strain ATCC 700007 / DSM 6899 / JCM 31910 / BCRC 17059 / LMG 24140 / F1)</name>
    <dbReference type="NCBI Taxonomy" id="351746"/>
    <lineage>
        <taxon>Bacteria</taxon>
        <taxon>Pseudomonadati</taxon>
        <taxon>Pseudomonadota</taxon>
        <taxon>Gammaproteobacteria</taxon>
        <taxon>Pseudomonadales</taxon>
        <taxon>Pseudomonadaceae</taxon>
        <taxon>Pseudomonas</taxon>
    </lineage>
</organism>
<dbReference type="EMBL" id="CP000712">
    <property type="protein sequence ID" value="ABQ79923.1"/>
    <property type="molecule type" value="Genomic_DNA"/>
</dbReference>
<dbReference type="SMR" id="A5W713"/>
<dbReference type="KEGG" id="ppf:Pput_3799"/>
<dbReference type="eggNOG" id="COG0236">
    <property type="taxonomic scope" value="Bacteria"/>
</dbReference>
<dbReference type="HOGENOM" id="CLU_108696_5_1_6"/>
<dbReference type="UniPathway" id="UPA00094"/>
<dbReference type="GO" id="GO:0005829">
    <property type="term" value="C:cytosol"/>
    <property type="evidence" value="ECO:0007669"/>
    <property type="project" value="TreeGrafter"/>
</dbReference>
<dbReference type="GO" id="GO:0016020">
    <property type="term" value="C:membrane"/>
    <property type="evidence" value="ECO:0007669"/>
    <property type="project" value="GOC"/>
</dbReference>
<dbReference type="GO" id="GO:0000035">
    <property type="term" value="F:acyl binding"/>
    <property type="evidence" value="ECO:0007669"/>
    <property type="project" value="TreeGrafter"/>
</dbReference>
<dbReference type="GO" id="GO:0000036">
    <property type="term" value="F:acyl carrier activity"/>
    <property type="evidence" value="ECO:0007669"/>
    <property type="project" value="UniProtKB-UniRule"/>
</dbReference>
<dbReference type="GO" id="GO:0009245">
    <property type="term" value="P:lipid A biosynthetic process"/>
    <property type="evidence" value="ECO:0007669"/>
    <property type="project" value="TreeGrafter"/>
</dbReference>
<dbReference type="FunFam" id="1.10.1200.10:FF:000001">
    <property type="entry name" value="Acyl carrier protein"/>
    <property type="match status" value="1"/>
</dbReference>
<dbReference type="Gene3D" id="1.10.1200.10">
    <property type="entry name" value="ACP-like"/>
    <property type="match status" value="1"/>
</dbReference>
<dbReference type="HAMAP" id="MF_01217">
    <property type="entry name" value="Acyl_carrier"/>
    <property type="match status" value="1"/>
</dbReference>
<dbReference type="InterPro" id="IPR003231">
    <property type="entry name" value="ACP"/>
</dbReference>
<dbReference type="InterPro" id="IPR036736">
    <property type="entry name" value="ACP-like_sf"/>
</dbReference>
<dbReference type="InterPro" id="IPR009081">
    <property type="entry name" value="PP-bd_ACP"/>
</dbReference>
<dbReference type="InterPro" id="IPR006162">
    <property type="entry name" value="Ppantetheine_attach_site"/>
</dbReference>
<dbReference type="NCBIfam" id="TIGR00517">
    <property type="entry name" value="acyl_carrier"/>
    <property type="match status" value="1"/>
</dbReference>
<dbReference type="NCBIfam" id="NF002148">
    <property type="entry name" value="PRK00982.1-2"/>
    <property type="match status" value="1"/>
</dbReference>
<dbReference type="NCBIfam" id="NF002149">
    <property type="entry name" value="PRK00982.1-3"/>
    <property type="match status" value="1"/>
</dbReference>
<dbReference type="NCBIfam" id="NF002150">
    <property type="entry name" value="PRK00982.1-4"/>
    <property type="match status" value="1"/>
</dbReference>
<dbReference type="NCBIfam" id="NF002151">
    <property type="entry name" value="PRK00982.1-5"/>
    <property type="match status" value="1"/>
</dbReference>
<dbReference type="PANTHER" id="PTHR20863">
    <property type="entry name" value="ACYL CARRIER PROTEIN"/>
    <property type="match status" value="1"/>
</dbReference>
<dbReference type="PANTHER" id="PTHR20863:SF76">
    <property type="entry name" value="CARRIER DOMAIN-CONTAINING PROTEIN"/>
    <property type="match status" value="1"/>
</dbReference>
<dbReference type="Pfam" id="PF00550">
    <property type="entry name" value="PP-binding"/>
    <property type="match status" value="1"/>
</dbReference>
<dbReference type="SUPFAM" id="SSF47336">
    <property type="entry name" value="ACP-like"/>
    <property type="match status" value="1"/>
</dbReference>
<dbReference type="PROSITE" id="PS50075">
    <property type="entry name" value="CARRIER"/>
    <property type="match status" value="1"/>
</dbReference>
<dbReference type="PROSITE" id="PS00012">
    <property type="entry name" value="PHOSPHOPANTETHEINE"/>
    <property type="match status" value="1"/>
</dbReference>
<feature type="chain" id="PRO_1000066662" description="Acyl carrier protein">
    <location>
        <begin position="1"/>
        <end position="78"/>
    </location>
</feature>
<feature type="domain" description="Carrier" evidence="2">
    <location>
        <begin position="2"/>
        <end position="77"/>
    </location>
</feature>
<feature type="modified residue" description="O-(pantetheine 4'-phosphoryl)serine" evidence="2">
    <location>
        <position position="37"/>
    </location>
</feature>
<comment type="function">
    <text evidence="1">Carrier of the growing fatty acid chain in fatty acid biosynthesis.</text>
</comment>
<comment type="pathway">
    <text evidence="1">Lipid metabolism; fatty acid biosynthesis.</text>
</comment>
<comment type="subcellular location">
    <subcellularLocation>
        <location evidence="1">Cytoplasm</location>
    </subcellularLocation>
</comment>
<comment type="PTM">
    <text evidence="1">4'-phosphopantetheine is transferred from CoA to a specific serine of apo-ACP by AcpS. This modification is essential for activity because fatty acids are bound in thioester linkage to the sulfhydryl of the prosthetic group.</text>
</comment>
<comment type="similarity">
    <text evidence="1">Belongs to the acyl carrier protein (ACP) family.</text>
</comment>
<evidence type="ECO:0000255" key="1">
    <source>
        <dbReference type="HAMAP-Rule" id="MF_01217"/>
    </source>
</evidence>
<evidence type="ECO:0000255" key="2">
    <source>
        <dbReference type="PROSITE-ProRule" id="PRU00258"/>
    </source>
</evidence>
<sequence>MSTIEERVKKIVAEQLGVKEEEVTIEKSFVDDLGADSLDTVELVMALEEEFETEIPDEEAEKITTVQAAIDYVKAHQA</sequence>
<name>ACP_PSEP1</name>
<gene>
    <name evidence="1" type="primary">acpP</name>
    <name type="ordered locus">Pput_3799</name>
</gene>
<keyword id="KW-0963">Cytoplasm</keyword>
<keyword id="KW-0275">Fatty acid biosynthesis</keyword>
<keyword id="KW-0276">Fatty acid metabolism</keyword>
<keyword id="KW-0444">Lipid biosynthesis</keyword>
<keyword id="KW-0443">Lipid metabolism</keyword>
<keyword id="KW-0596">Phosphopantetheine</keyword>
<keyword id="KW-0597">Phosphoprotein</keyword>
<reference key="1">
    <citation type="submission" date="2007-05" db="EMBL/GenBank/DDBJ databases">
        <title>Complete sequence of Pseudomonas putida F1.</title>
        <authorList>
            <consortium name="US DOE Joint Genome Institute"/>
            <person name="Copeland A."/>
            <person name="Lucas S."/>
            <person name="Lapidus A."/>
            <person name="Barry K."/>
            <person name="Detter J.C."/>
            <person name="Glavina del Rio T."/>
            <person name="Hammon N."/>
            <person name="Israni S."/>
            <person name="Dalin E."/>
            <person name="Tice H."/>
            <person name="Pitluck S."/>
            <person name="Chain P."/>
            <person name="Malfatti S."/>
            <person name="Shin M."/>
            <person name="Vergez L."/>
            <person name="Schmutz J."/>
            <person name="Larimer F."/>
            <person name="Land M."/>
            <person name="Hauser L."/>
            <person name="Kyrpides N."/>
            <person name="Lykidis A."/>
            <person name="Parales R."/>
            <person name="Richardson P."/>
        </authorList>
    </citation>
    <scope>NUCLEOTIDE SEQUENCE [LARGE SCALE GENOMIC DNA]</scope>
    <source>
        <strain>ATCC 700007 / DSM 6899 / JCM 31910 / BCRC 17059 / LMG 24140 / F1</strain>
    </source>
</reference>
<accession>A5W713</accession>
<protein>
    <recommendedName>
        <fullName evidence="1">Acyl carrier protein</fullName>
        <shortName evidence="1">ACP</shortName>
    </recommendedName>
</protein>